<proteinExistence type="inferred from homology"/>
<accession>Q44428</accession>
<sequence length="93" mass="10361">MDKFVTHLGKIMPLRRSDVDTDQIIPAVYLKRVTRTGFEDGLFSAWREDPGFVLHNPAHAGATILVAGPNFGTGSSRQHAVWALRDWGFKVVI</sequence>
<comment type="function">
    <text evidence="1">Catalyzes the isomerization between 2-isopropylmalate and 3-isopropylmalate, via the formation of 2-isopropylmaleate.</text>
</comment>
<comment type="catalytic activity">
    <reaction>
        <text>(2R,3S)-3-isopropylmalate = (2S)-2-isopropylmalate</text>
        <dbReference type="Rhea" id="RHEA:32287"/>
        <dbReference type="ChEBI" id="CHEBI:1178"/>
        <dbReference type="ChEBI" id="CHEBI:35121"/>
        <dbReference type="EC" id="4.2.1.33"/>
    </reaction>
</comment>
<comment type="pathway">
    <text>Amino-acid biosynthesis; L-leucine biosynthesis; L-leucine from 3-methyl-2-oxobutanoate: step 2/4.</text>
</comment>
<comment type="subunit">
    <text>Heterodimer of LeuC and LeuD.</text>
</comment>
<comment type="similarity">
    <text evidence="2">Belongs to the LeuD family. LeuD type 1 subfamily.</text>
</comment>
<gene>
    <name type="primary">leuD</name>
</gene>
<keyword id="KW-0028">Amino-acid biosynthesis</keyword>
<keyword id="KW-0100">Branched-chain amino acid biosynthesis</keyword>
<keyword id="KW-0432">Leucine biosynthesis</keyword>
<keyword id="KW-0456">Lyase</keyword>
<evidence type="ECO:0000250" key="1"/>
<evidence type="ECO:0000305" key="2"/>
<feature type="chain" id="PRO_0000141771" description="3-isopropylmalate dehydratase small subunit">
    <location>
        <begin position="1"/>
        <end position="93" status="greater than"/>
    </location>
</feature>
<feature type="non-terminal residue">
    <location>
        <position position="93"/>
    </location>
</feature>
<reference key="1">
    <citation type="journal article" date="1995" name="Gene">
        <title>Complementation of a Streptomyces lividans Leu- mutant by the Actinoplanes teichomyceticus leuC gene.</title>
        <authorList>
            <person name="Castelli P."/>
            <person name="Donadio S."/>
            <person name="Marinelli F."/>
            <person name="Borghi A."/>
            <person name="Sosio M."/>
        </authorList>
    </citation>
    <scope>NUCLEOTIDE SEQUENCE [GENOMIC DNA]</scope>
    <source>
        <strain>ATCC 31121 / DSM 43866 / BCRC 12106 / JCM 3252 / KCTC 9543 / NBRC 13999 / NCIMB 12640 / NRRL B-16726 /AB 8327</strain>
    </source>
</reference>
<name>LEUD_ACTTI</name>
<dbReference type="EC" id="4.2.1.33"/>
<dbReference type="EMBL" id="X84647">
    <property type="protein sequence ID" value="CAA59141.1"/>
    <property type="molecule type" value="Genomic_DNA"/>
</dbReference>
<dbReference type="PIR" id="I39700">
    <property type="entry name" value="I39700"/>
</dbReference>
<dbReference type="SMR" id="Q44428"/>
<dbReference type="UniPathway" id="UPA00048">
    <property type="reaction ID" value="UER00071"/>
</dbReference>
<dbReference type="GO" id="GO:0003861">
    <property type="term" value="F:3-isopropylmalate dehydratase activity"/>
    <property type="evidence" value="ECO:0007669"/>
    <property type="project" value="UniProtKB-EC"/>
</dbReference>
<dbReference type="GO" id="GO:0009098">
    <property type="term" value="P:L-leucine biosynthetic process"/>
    <property type="evidence" value="ECO:0007669"/>
    <property type="project" value="UniProtKB-UniPathway"/>
</dbReference>
<dbReference type="Gene3D" id="3.20.19.10">
    <property type="entry name" value="Aconitase, domain 4"/>
    <property type="match status" value="1"/>
</dbReference>
<dbReference type="InterPro" id="IPR015928">
    <property type="entry name" value="Aconitase/3IPM_dehydase_swvl"/>
</dbReference>
<dbReference type="InterPro" id="IPR000573">
    <property type="entry name" value="AconitaseA/IPMdHydase_ssu_swvl"/>
</dbReference>
<dbReference type="InterPro" id="IPR050075">
    <property type="entry name" value="LeuD"/>
</dbReference>
<dbReference type="PANTHER" id="PTHR43345:SF5">
    <property type="entry name" value="3-ISOPROPYLMALATE DEHYDRATASE SMALL SUBUNIT"/>
    <property type="match status" value="1"/>
</dbReference>
<dbReference type="PANTHER" id="PTHR43345">
    <property type="entry name" value="3-ISOPROPYLMALATE DEHYDRATASE SMALL SUBUNIT 2-RELATED-RELATED"/>
    <property type="match status" value="1"/>
</dbReference>
<dbReference type="Pfam" id="PF00694">
    <property type="entry name" value="Aconitase_C"/>
    <property type="match status" value="1"/>
</dbReference>
<dbReference type="SUPFAM" id="SSF52016">
    <property type="entry name" value="LeuD/IlvD-like"/>
    <property type="match status" value="1"/>
</dbReference>
<protein>
    <recommendedName>
        <fullName>3-isopropylmalate dehydratase small subunit</fullName>
        <ecNumber>4.2.1.33</ecNumber>
    </recommendedName>
    <alternativeName>
        <fullName>Alpha-IPM isomerase</fullName>
        <shortName>IPMI</shortName>
    </alternativeName>
    <alternativeName>
        <fullName>Isopropylmalate isomerase</fullName>
    </alternativeName>
</protein>
<organism>
    <name type="scientific">Actinoplanes teichomyceticus</name>
    <dbReference type="NCBI Taxonomy" id="1867"/>
    <lineage>
        <taxon>Bacteria</taxon>
        <taxon>Bacillati</taxon>
        <taxon>Actinomycetota</taxon>
        <taxon>Actinomycetes</taxon>
        <taxon>Micromonosporales</taxon>
        <taxon>Micromonosporaceae</taxon>
        <taxon>Actinoplanes</taxon>
    </lineage>
</organism>